<feature type="signal peptide" evidence="2">
    <location>
        <begin position="1"/>
        <end position="19"/>
    </location>
</feature>
<feature type="propeptide" id="PRO_0000035031">
    <location>
        <begin position="20"/>
        <end position="48"/>
    </location>
</feature>
<feature type="peptide" id="PRO_0000035032" description="Conotoxin mr5.1b">
    <location>
        <begin position="51"/>
        <end position="65"/>
    </location>
</feature>
<feature type="modified residue" description="4-carboxyglutamate" evidence="1">
    <location>
        <position position="60"/>
    </location>
</feature>
<evidence type="ECO:0000250" key="1"/>
<evidence type="ECO:0000255" key="2"/>
<evidence type="ECO:0000303" key="3">
    <source>
    </source>
</evidence>
<evidence type="ECO:0000305" key="4"/>
<sequence length="65" mass="7443">MRCVPVFVILLLLIASAPSVDARLKTKDDMPLPSSHANIKRTLQMLRNKRCCPGWELCCEWDDGW</sequence>
<reference key="1">
    <citation type="journal article" date="2005" name="Toxicon">
        <title>Sequence diversity of T-superfamily conotoxins from Conus marmoreus.</title>
        <authorList>
            <person name="Han Y.-H."/>
            <person name="Wang Q."/>
            <person name="Jiang H."/>
            <person name="Miao X.-W."/>
            <person name="Chen J.-S."/>
            <person name="Chi C.-W."/>
        </authorList>
    </citation>
    <scope>NUCLEOTIDE SEQUENCE [MRNA]</scope>
    <source>
        <tissue>Venom duct</tissue>
    </source>
</reference>
<accession>Q6PN85</accession>
<comment type="subcellular location">
    <subcellularLocation>
        <location evidence="1">Secreted</location>
    </subcellularLocation>
</comment>
<comment type="tissue specificity">
    <text>Expressed by the venom duct.</text>
</comment>
<comment type="domain">
    <text>The cysteine framework is V (CC-CC).</text>
</comment>
<comment type="PTM">
    <text evidence="4">Contains 2 disulfide bonds that can be either 'C1-C3, C2-C4' or 'C1-C4, C2-C3', since these disulfide connectivities have been observed for conotoxins with cysteine framework V (for examples, see AC P0DQQ7 and AC P81755).</text>
</comment>
<comment type="similarity">
    <text evidence="4">Belongs to the conotoxin T superfamily.</text>
</comment>
<proteinExistence type="evidence at transcript level"/>
<organism>
    <name type="scientific">Conus marmoreus</name>
    <name type="common">Marble cone</name>
    <dbReference type="NCBI Taxonomy" id="42752"/>
    <lineage>
        <taxon>Eukaryota</taxon>
        <taxon>Metazoa</taxon>
        <taxon>Spiralia</taxon>
        <taxon>Lophotrochozoa</taxon>
        <taxon>Mollusca</taxon>
        <taxon>Gastropoda</taxon>
        <taxon>Caenogastropoda</taxon>
        <taxon>Neogastropoda</taxon>
        <taxon>Conoidea</taxon>
        <taxon>Conidae</taxon>
        <taxon>Conus</taxon>
    </lineage>
</organism>
<protein>
    <recommendedName>
        <fullName evidence="3">Conotoxin mr5.1b</fullName>
    </recommendedName>
</protein>
<name>CT51B_CONMR</name>
<dbReference type="EMBL" id="AY591765">
    <property type="protein sequence ID" value="AAT01629.1"/>
    <property type="molecule type" value="mRNA"/>
</dbReference>
<dbReference type="ConoServer" id="856">
    <property type="toxin name" value="Mr5.1b precursor"/>
</dbReference>
<dbReference type="GO" id="GO:0005576">
    <property type="term" value="C:extracellular region"/>
    <property type="evidence" value="ECO:0007669"/>
    <property type="project" value="UniProtKB-SubCell"/>
</dbReference>
<dbReference type="GO" id="GO:0090729">
    <property type="term" value="F:toxin activity"/>
    <property type="evidence" value="ECO:0007669"/>
    <property type="project" value="UniProtKB-KW"/>
</dbReference>
<dbReference type="InterPro" id="IPR031565">
    <property type="entry name" value="T-conotoxin"/>
</dbReference>
<dbReference type="Pfam" id="PF16981">
    <property type="entry name" value="Chi-conotoxin"/>
    <property type="match status" value="1"/>
</dbReference>
<keyword id="KW-0165">Cleavage on pair of basic residues</keyword>
<keyword id="KW-1015">Disulfide bond</keyword>
<keyword id="KW-0301">Gamma-carboxyglutamic acid</keyword>
<keyword id="KW-0964">Secreted</keyword>
<keyword id="KW-0732">Signal</keyword>
<keyword id="KW-0800">Toxin</keyword>